<sequence length="327" mass="35414">MASSVPGPIDLPESRYDLSTYWGRIRHCAEISDPTMLLTTEKDLAHAREIISAYRHGELKETTPEFWRAKKQLDSTVHPDTGKTVLLPFRMSSNVLSNLVVTVGMLTPGLGTAGTVFWQWANQSLNVAVNSANANKSHPMSTSQLLTNYAAAVTASCGVALGLNNLVPRLKNISPHSKLILGRLVPFAAVVSAGIVNVFLMRGNEIRKGISVFDSNGDEVGKSKKAAFMAVGETALSRVINATPTMVIPPLILVRLQRGVLKGKSLGVQTLANLGLISVTMFSALPFALGIFPQRQAIHLNKLEPELHGKKDKDGKPIEKVYFNRGI</sequence>
<gene>
    <name evidence="5 7" type="primary">FSF1</name>
    <name type="ordered locus">YOR271C</name>
</gene>
<keyword id="KW-0007">Acetylation</keyword>
<keyword id="KW-0029">Amino-acid transport</keyword>
<keyword id="KW-0472">Membrane</keyword>
<keyword id="KW-0496">Mitochondrion</keyword>
<keyword id="KW-1185">Reference proteome</keyword>
<keyword id="KW-0812">Transmembrane</keyword>
<keyword id="KW-1133">Transmembrane helix</keyword>
<keyword id="KW-0813">Transport</keyword>
<name>FSF1_YEAST</name>
<protein>
    <recommendedName>
        <fullName evidence="6">Sideroflexin FSF1</fullName>
    </recommendedName>
    <alternativeName>
        <fullName evidence="5">Fungal sideroflexin-1</fullName>
    </alternativeName>
</protein>
<proteinExistence type="evidence at protein level"/>
<reference key="1">
    <citation type="journal article" date="1996" name="Yeast">
        <title>DNA sequence analysis of the VPH1-SNF2 region on chromosome XV of Saccharomyces cerevisiae.</title>
        <authorList>
            <person name="Cheret G."/>
            <person name="Bernardi A."/>
            <person name="Sor F.J."/>
        </authorList>
    </citation>
    <scope>NUCLEOTIDE SEQUENCE [GENOMIC DNA]</scope>
    <source>
        <strain>ATCC 96604 / S288c / FY1679</strain>
    </source>
</reference>
<reference key="2">
    <citation type="journal article" date="1997" name="Nature">
        <title>The nucleotide sequence of Saccharomyces cerevisiae chromosome XV.</title>
        <authorList>
            <person name="Dujon B."/>
            <person name="Albermann K."/>
            <person name="Aldea M."/>
            <person name="Alexandraki D."/>
            <person name="Ansorge W."/>
            <person name="Arino J."/>
            <person name="Benes V."/>
            <person name="Bohn C."/>
            <person name="Bolotin-Fukuhara M."/>
            <person name="Bordonne R."/>
            <person name="Boyer J."/>
            <person name="Camasses A."/>
            <person name="Casamayor A."/>
            <person name="Casas C."/>
            <person name="Cheret G."/>
            <person name="Cziepluch C."/>
            <person name="Daignan-Fornier B."/>
            <person name="Dang V.-D."/>
            <person name="de Haan M."/>
            <person name="Delius H."/>
            <person name="Durand P."/>
            <person name="Fairhead C."/>
            <person name="Feldmann H."/>
            <person name="Gaillon L."/>
            <person name="Galisson F."/>
            <person name="Gamo F.-J."/>
            <person name="Gancedo C."/>
            <person name="Goffeau A."/>
            <person name="Goulding S.E."/>
            <person name="Grivell L.A."/>
            <person name="Habbig B."/>
            <person name="Hand N.J."/>
            <person name="Hani J."/>
            <person name="Hattenhorst U."/>
            <person name="Hebling U."/>
            <person name="Hernando Y."/>
            <person name="Herrero E."/>
            <person name="Heumann K."/>
            <person name="Hiesel R."/>
            <person name="Hilger F."/>
            <person name="Hofmann B."/>
            <person name="Hollenberg C.P."/>
            <person name="Hughes B."/>
            <person name="Jauniaux J.-C."/>
            <person name="Kalogeropoulos A."/>
            <person name="Katsoulou C."/>
            <person name="Kordes E."/>
            <person name="Lafuente M.J."/>
            <person name="Landt O."/>
            <person name="Louis E.J."/>
            <person name="Maarse A.C."/>
            <person name="Madania A."/>
            <person name="Mannhaupt G."/>
            <person name="Marck C."/>
            <person name="Martin R.P."/>
            <person name="Mewes H.-W."/>
            <person name="Michaux G."/>
            <person name="Paces V."/>
            <person name="Parle-McDermott A.G."/>
            <person name="Pearson B.M."/>
            <person name="Perrin A."/>
            <person name="Pettersson B."/>
            <person name="Poch O."/>
            <person name="Pohl T.M."/>
            <person name="Poirey R."/>
            <person name="Portetelle D."/>
            <person name="Pujol A."/>
            <person name="Purnelle B."/>
            <person name="Ramezani Rad M."/>
            <person name="Rechmann S."/>
            <person name="Schwager C."/>
            <person name="Schweizer M."/>
            <person name="Sor F."/>
            <person name="Sterky F."/>
            <person name="Tarassov I.A."/>
            <person name="Teodoru C."/>
            <person name="Tettelin H."/>
            <person name="Thierry A."/>
            <person name="Tobiasch E."/>
            <person name="Tzermia M."/>
            <person name="Uhlen M."/>
            <person name="Unseld M."/>
            <person name="Valens M."/>
            <person name="Vandenbol M."/>
            <person name="Vetter I."/>
            <person name="Vlcek C."/>
            <person name="Voet M."/>
            <person name="Volckaert G."/>
            <person name="Voss H."/>
            <person name="Wambutt R."/>
            <person name="Wedler H."/>
            <person name="Wiemann S."/>
            <person name="Winsor B."/>
            <person name="Wolfe K.H."/>
            <person name="Zollner A."/>
            <person name="Zumstein E."/>
            <person name="Kleine K."/>
        </authorList>
    </citation>
    <scope>NUCLEOTIDE SEQUENCE [LARGE SCALE GENOMIC DNA]</scope>
    <source>
        <strain>ATCC 204508 / S288c</strain>
    </source>
</reference>
<reference key="3">
    <citation type="journal article" date="2014" name="G3 (Bethesda)">
        <title>The reference genome sequence of Saccharomyces cerevisiae: Then and now.</title>
        <authorList>
            <person name="Engel S.R."/>
            <person name="Dietrich F.S."/>
            <person name="Fisk D.G."/>
            <person name="Binkley G."/>
            <person name="Balakrishnan R."/>
            <person name="Costanzo M.C."/>
            <person name="Dwight S.S."/>
            <person name="Hitz B.C."/>
            <person name="Karra K."/>
            <person name="Nash R.S."/>
            <person name="Weng S."/>
            <person name="Wong E.D."/>
            <person name="Lloyd P."/>
            <person name="Skrzypek M.S."/>
            <person name="Miyasato S.R."/>
            <person name="Simison M."/>
            <person name="Cherry J.M."/>
        </authorList>
    </citation>
    <scope>GENOME REANNOTATION</scope>
    <source>
        <strain>ATCC 204508 / S288c</strain>
    </source>
</reference>
<reference key="4">
    <citation type="journal article" date="2003" name="Nature">
        <title>Global analysis of protein localization in budding yeast.</title>
        <authorList>
            <person name="Huh W.-K."/>
            <person name="Falvo J.V."/>
            <person name="Gerke L.C."/>
            <person name="Carroll A.S."/>
            <person name="Howson R.W."/>
            <person name="Weissman J.S."/>
            <person name="O'Shea E.K."/>
        </authorList>
    </citation>
    <scope>SUBCELLULAR LOCATION [LARGE SCALE ANALYSIS]</scope>
</reference>
<reference key="5">
    <citation type="journal article" date="2003" name="Nature">
        <title>Global analysis of protein expression in yeast.</title>
        <authorList>
            <person name="Ghaemmaghami S."/>
            <person name="Huh W.-K."/>
            <person name="Bower K."/>
            <person name="Howson R.W."/>
            <person name="Belle A."/>
            <person name="Dephoure N."/>
            <person name="O'Shea E.K."/>
            <person name="Weissman J.S."/>
        </authorList>
    </citation>
    <scope>LEVEL OF PROTEIN EXPRESSION [LARGE SCALE ANALYSIS]</scope>
</reference>
<reference key="6">
    <citation type="journal article" date="2006" name="J. Proteome Res.">
        <title>Toward the complete yeast mitochondrial proteome: multidimensional separation techniques for mitochondrial proteomics.</title>
        <authorList>
            <person name="Reinders J."/>
            <person name="Zahedi R.P."/>
            <person name="Pfanner N."/>
            <person name="Meisinger C."/>
            <person name="Sickmann A."/>
        </authorList>
    </citation>
    <scope>SUBCELLULAR LOCATION [LARGE SCALE ANALYSIS]</scope>
    <scope>IDENTIFICATION BY MASS SPECTROMETRY</scope>
</reference>
<reference key="7">
    <citation type="journal article" date="2007" name="Fungal Genet. Biol.">
        <title>In silico analyses of Fsf1 sequences, a new group of fungal proteins orthologous to the metazoan sideroblastic anemia-related sideroflexin family.</title>
        <authorList>
            <person name="Miotto G."/>
            <person name="Tessaro S."/>
            <person name="Rotta G.A."/>
            <person name="Bonatto D."/>
        </authorList>
    </citation>
    <scope>GENE NAME</scope>
</reference>
<reference key="8">
    <citation type="journal article" date="2012" name="Proc. Natl. Acad. Sci. U.S.A.">
        <title>N-terminal acetylome analyses and functional insights of the N-terminal acetyltransferase NatB.</title>
        <authorList>
            <person name="Van Damme P."/>
            <person name="Lasa M."/>
            <person name="Polevoda B."/>
            <person name="Gazquez C."/>
            <person name="Elosegui-Artola A."/>
            <person name="Kim D.S."/>
            <person name="De Juan-Pardo E."/>
            <person name="Demeyer K."/>
            <person name="Hole K."/>
            <person name="Larrea E."/>
            <person name="Timmerman E."/>
            <person name="Prieto J."/>
            <person name="Arnesen T."/>
            <person name="Sherman F."/>
            <person name="Gevaert K."/>
            <person name="Aldabe R."/>
        </authorList>
    </citation>
    <scope>ACETYLATION [LARGE SCALE ANALYSIS] AT ALA-2</scope>
    <scope>CLEAVAGE OF INITIATOR METHIONINE [LARGE SCALE ANALYSIS]</scope>
    <scope>IDENTIFICATION BY MASS SPECTROMETRY [LARGE SCALE ANALYSIS]</scope>
</reference>
<reference key="9">
    <citation type="journal article" date="2018" name="Science">
        <title>SFXN1 is a mitochondrial serine transporter required for one-carbon metabolism.</title>
        <authorList>
            <person name="Kory N."/>
            <person name="Wyant G.A."/>
            <person name="Prakash G."/>
            <person name="Uit de Bos J."/>
            <person name="Bottanelli F."/>
            <person name="Pacold M.E."/>
            <person name="Chan S.H."/>
            <person name="Lewis C.A."/>
            <person name="Wang T."/>
            <person name="Keys H.R."/>
            <person name="Guo Y.E."/>
            <person name="Sabatini D.M."/>
        </authorList>
    </citation>
    <scope>FUNCTION</scope>
    <scope>SUBCELLULAR LOCATION</scope>
</reference>
<accession>Q12029</accession>
<accession>D6W2X1</accession>
<dbReference type="EMBL" id="X89633">
    <property type="protein sequence ID" value="CAA61777.1"/>
    <property type="molecule type" value="Genomic_DNA"/>
</dbReference>
<dbReference type="EMBL" id="Z75179">
    <property type="protein sequence ID" value="CAA99495.1"/>
    <property type="molecule type" value="Genomic_DNA"/>
</dbReference>
<dbReference type="EMBL" id="BK006948">
    <property type="protein sequence ID" value="DAA11037.1"/>
    <property type="molecule type" value="Genomic_DNA"/>
</dbReference>
<dbReference type="PIR" id="S67168">
    <property type="entry name" value="S67168"/>
</dbReference>
<dbReference type="RefSeq" id="NP_014914.1">
    <property type="nucleotide sequence ID" value="NM_001183690.1"/>
</dbReference>
<dbReference type="BioGRID" id="34660">
    <property type="interactions" value="83"/>
</dbReference>
<dbReference type="DIP" id="DIP-3828N"/>
<dbReference type="FunCoup" id="Q12029">
    <property type="interactions" value="346"/>
</dbReference>
<dbReference type="IntAct" id="Q12029">
    <property type="interactions" value="29"/>
</dbReference>
<dbReference type="STRING" id="4932.YOR271C"/>
<dbReference type="TCDB" id="2.A.54.1.4">
    <property type="family name" value="the sideroflexin (sfxn) family (formerly the mitochondrial tricarboxylate carrier (mtc) family)"/>
</dbReference>
<dbReference type="iPTMnet" id="Q12029"/>
<dbReference type="PaxDb" id="4932-YOR271C"/>
<dbReference type="PeptideAtlas" id="Q12029"/>
<dbReference type="EnsemblFungi" id="YOR271C_mRNA">
    <property type="protein sequence ID" value="YOR271C"/>
    <property type="gene ID" value="YOR271C"/>
</dbReference>
<dbReference type="GeneID" id="854445"/>
<dbReference type="KEGG" id="sce:YOR271C"/>
<dbReference type="AGR" id="SGD:S000005797"/>
<dbReference type="SGD" id="S000005797">
    <property type="gene designation" value="FSF1"/>
</dbReference>
<dbReference type="VEuPathDB" id="FungiDB:YOR271C"/>
<dbReference type="eggNOG" id="KOG3767">
    <property type="taxonomic scope" value="Eukaryota"/>
</dbReference>
<dbReference type="GeneTree" id="ENSGT01030000234641"/>
<dbReference type="HOGENOM" id="CLU_039425_0_0_1"/>
<dbReference type="InParanoid" id="Q12029"/>
<dbReference type="OMA" id="GRVRHCA"/>
<dbReference type="OrthoDB" id="6608471at2759"/>
<dbReference type="BioCyc" id="YEAST:G3O-33761-MONOMER"/>
<dbReference type="BioGRID-ORCS" id="854445">
    <property type="hits" value="10 hits in 10 CRISPR screens"/>
</dbReference>
<dbReference type="PRO" id="PR:Q12029"/>
<dbReference type="Proteomes" id="UP000002311">
    <property type="component" value="Chromosome XV"/>
</dbReference>
<dbReference type="RNAct" id="Q12029">
    <property type="molecule type" value="protein"/>
</dbReference>
<dbReference type="GO" id="GO:0005743">
    <property type="term" value="C:mitochondrial inner membrane"/>
    <property type="evidence" value="ECO:0000318"/>
    <property type="project" value="GO_Central"/>
</dbReference>
<dbReference type="GO" id="GO:0005739">
    <property type="term" value="C:mitochondrion"/>
    <property type="evidence" value="ECO:0000314"/>
    <property type="project" value="UniProtKB"/>
</dbReference>
<dbReference type="GO" id="GO:0015194">
    <property type="term" value="F:L-serine transmembrane transporter activity"/>
    <property type="evidence" value="ECO:0000314"/>
    <property type="project" value="UniProtKB"/>
</dbReference>
<dbReference type="GO" id="GO:0015075">
    <property type="term" value="F:monoatomic ion transmembrane transporter activity"/>
    <property type="evidence" value="ECO:0007669"/>
    <property type="project" value="InterPro"/>
</dbReference>
<dbReference type="GO" id="GO:0022857">
    <property type="term" value="F:transmembrane transporter activity"/>
    <property type="evidence" value="ECO:0000318"/>
    <property type="project" value="GO_Central"/>
</dbReference>
<dbReference type="GO" id="GO:0071454">
    <property type="term" value="P:cellular response to anoxia"/>
    <property type="evidence" value="ECO:0000315"/>
    <property type="project" value="SGD"/>
</dbReference>
<dbReference type="GO" id="GO:1990542">
    <property type="term" value="P:mitochondrial transmembrane transport"/>
    <property type="evidence" value="ECO:0000314"/>
    <property type="project" value="UniProtKB"/>
</dbReference>
<dbReference type="GO" id="GO:0006730">
    <property type="term" value="P:one-carbon metabolic process"/>
    <property type="evidence" value="ECO:0000314"/>
    <property type="project" value="UniProtKB"/>
</dbReference>
<dbReference type="GO" id="GO:0140300">
    <property type="term" value="P:serine import into mitochondrion"/>
    <property type="evidence" value="ECO:0000314"/>
    <property type="project" value="UniProtKB"/>
</dbReference>
<dbReference type="InterPro" id="IPR004686">
    <property type="entry name" value="Mtc"/>
</dbReference>
<dbReference type="NCBIfam" id="TIGR00798">
    <property type="entry name" value="mtc"/>
    <property type="match status" value="1"/>
</dbReference>
<dbReference type="PANTHER" id="PTHR11153">
    <property type="entry name" value="SIDEROFLEXIN"/>
    <property type="match status" value="1"/>
</dbReference>
<dbReference type="PANTHER" id="PTHR11153:SF6">
    <property type="entry name" value="SIDEROFLEXIN-5"/>
    <property type="match status" value="1"/>
</dbReference>
<dbReference type="Pfam" id="PF03820">
    <property type="entry name" value="SFXNs"/>
    <property type="match status" value="1"/>
</dbReference>
<evidence type="ECO:0000255" key="1"/>
<evidence type="ECO:0000269" key="2">
    <source>
    </source>
</evidence>
<evidence type="ECO:0000269" key="3">
    <source>
    </source>
</evidence>
<evidence type="ECO:0000269" key="4">
    <source>
    </source>
</evidence>
<evidence type="ECO:0000303" key="5">
    <source>
    </source>
</evidence>
<evidence type="ECO:0000305" key="6"/>
<evidence type="ECO:0000312" key="7">
    <source>
        <dbReference type="SGD" id="S000005797"/>
    </source>
</evidence>
<evidence type="ECO:0007744" key="8">
    <source>
    </source>
</evidence>
<feature type="initiator methionine" description="Removed" evidence="8">
    <location>
        <position position="1"/>
    </location>
</feature>
<feature type="chain" id="PRO_0000237642" description="Sideroflexin FSF1">
    <location>
        <begin position="2"/>
        <end position="327"/>
    </location>
</feature>
<feature type="transmembrane region" description="Helical" evidence="1">
    <location>
        <begin position="98"/>
        <end position="118"/>
    </location>
</feature>
<feature type="transmembrane region" description="Helical" evidence="1">
    <location>
        <begin position="143"/>
        <end position="163"/>
    </location>
</feature>
<feature type="transmembrane region" description="Helical" evidence="1">
    <location>
        <begin position="179"/>
        <end position="199"/>
    </location>
</feature>
<feature type="transmembrane region" description="Helical" evidence="1">
    <location>
        <begin position="272"/>
        <end position="292"/>
    </location>
</feature>
<feature type="modified residue" description="N-acetylalanine" evidence="8">
    <location>
        <position position="2"/>
    </location>
</feature>
<comment type="function">
    <text evidence="4">Mitochondrial amino-acid transporter that mediates transport of serine into mitochondria.</text>
</comment>
<comment type="subcellular location">
    <subcellularLocation>
        <location evidence="3 4">Mitochondrion membrane</location>
        <topology evidence="1">Multi-pass membrane protein</topology>
    </subcellularLocation>
</comment>
<comment type="miscellaneous">
    <text evidence="2">Present with 9290 molecules/cell in log phase SD medium.</text>
</comment>
<comment type="similarity">
    <text evidence="6">Belongs to the sideroflexin family.</text>
</comment>
<organism>
    <name type="scientific">Saccharomyces cerevisiae (strain ATCC 204508 / S288c)</name>
    <name type="common">Baker's yeast</name>
    <dbReference type="NCBI Taxonomy" id="559292"/>
    <lineage>
        <taxon>Eukaryota</taxon>
        <taxon>Fungi</taxon>
        <taxon>Dikarya</taxon>
        <taxon>Ascomycota</taxon>
        <taxon>Saccharomycotina</taxon>
        <taxon>Saccharomycetes</taxon>
        <taxon>Saccharomycetales</taxon>
        <taxon>Saccharomycetaceae</taxon>
        <taxon>Saccharomyces</taxon>
    </lineage>
</organism>